<comment type="function">
    <text evidence="1">Forms part of the ribosomal stalk, playing a central role in the interaction of the ribosome with GTP-bound translation factors.</text>
</comment>
<comment type="subunit">
    <text evidence="1">Part of the ribosomal stalk of the 50S ribosomal subunit. The N-terminus interacts with L11 and the large rRNA to form the base of the stalk. The C-terminus forms an elongated spine to which L12 dimers bind in a sequential fashion forming a multimeric L10(L12)X complex.</text>
</comment>
<comment type="similarity">
    <text evidence="1">Belongs to the universal ribosomal protein uL10 family.</text>
</comment>
<proteinExistence type="inferred from homology"/>
<evidence type="ECO:0000255" key="1">
    <source>
        <dbReference type="HAMAP-Rule" id="MF_00362"/>
    </source>
</evidence>
<evidence type="ECO:0000305" key="2"/>
<organism>
    <name type="scientific">Nitrosomonas eutropha (strain DSM 101675 / C91 / Nm57)</name>
    <dbReference type="NCBI Taxonomy" id="335283"/>
    <lineage>
        <taxon>Bacteria</taxon>
        <taxon>Pseudomonadati</taxon>
        <taxon>Pseudomonadota</taxon>
        <taxon>Betaproteobacteria</taxon>
        <taxon>Nitrosomonadales</taxon>
        <taxon>Nitrosomonadaceae</taxon>
        <taxon>Nitrosomonas</taxon>
    </lineage>
</organism>
<feature type="chain" id="PRO_1000005544" description="Large ribosomal subunit protein uL10">
    <location>
        <begin position="1"/>
        <end position="171"/>
    </location>
</feature>
<dbReference type="EMBL" id="CP000450">
    <property type="protein sequence ID" value="ABI60031.1"/>
    <property type="molecule type" value="Genomic_DNA"/>
</dbReference>
<dbReference type="RefSeq" id="WP_011634837.1">
    <property type="nucleotide sequence ID" value="NC_008344.1"/>
</dbReference>
<dbReference type="SMR" id="Q0AF51"/>
<dbReference type="STRING" id="335283.Neut_1797"/>
<dbReference type="KEGG" id="net:Neut_1797"/>
<dbReference type="eggNOG" id="COG0244">
    <property type="taxonomic scope" value="Bacteria"/>
</dbReference>
<dbReference type="HOGENOM" id="CLU_092227_0_1_4"/>
<dbReference type="OrthoDB" id="9808307at2"/>
<dbReference type="Proteomes" id="UP000001966">
    <property type="component" value="Chromosome"/>
</dbReference>
<dbReference type="GO" id="GO:1990904">
    <property type="term" value="C:ribonucleoprotein complex"/>
    <property type="evidence" value="ECO:0007669"/>
    <property type="project" value="UniProtKB-KW"/>
</dbReference>
<dbReference type="GO" id="GO:0005840">
    <property type="term" value="C:ribosome"/>
    <property type="evidence" value="ECO:0007669"/>
    <property type="project" value="UniProtKB-KW"/>
</dbReference>
<dbReference type="GO" id="GO:0070180">
    <property type="term" value="F:large ribosomal subunit rRNA binding"/>
    <property type="evidence" value="ECO:0007669"/>
    <property type="project" value="UniProtKB-UniRule"/>
</dbReference>
<dbReference type="GO" id="GO:0006412">
    <property type="term" value="P:translation"/>
    <property type="evidence" value="ECO:0007669"/>
    <property type="project" value="UniProtKB-UniRule"/>
</dbReference>
<dbReference type="CDD" id="cd05797">
    <property type="entry name" value="Ribosomal_L10"/>
    <property type="match status" value="1"/>
</dbReference>
<dbReference type="Gene3D" id="3.30.70.1730">
    <property type="match status" value="1"/>
</dbReference>
<dbReference type="Gene3D" id="6.10.250.290">
    <property type="match status" value="1"/>
</dbReference>
<dbReference type="HAMAP" id="MF_00362">
    <property type="entry name" value="Ribosomal_uL10"/>
    <property type="match status" value="1"/>
</dbReference>
<dbReference type="InterPro" id="IPR001790">
    <property type="entry name" value="Ribosomal_uL10"/>
</dbReference>
<dbReference type="InterPro" id="IPR043141">
    <property type="entry name" value="Ribosomal_uL10-like_sf"/>
</dbReference>
<dbReference type="InterPro" id="IPR022973">
    <property type="entry name" value="Ribosomal_uL10_bac"/>
</dbReference>
<dbReference type="InterPro" id="IPR047865">
    <property type="entry name" value="Ribosomal_uL10_bac_type"/>
</dbReference>
<dbReference type="NCBIfam" id="NF000955">
    <property type="entry name" value="PRK00099.1-1"/>
    <property type="match status" value="1"/>
</dbReference>
<dbReference type="PANTHER" id="PTHR11560">
    <property type="entry name" value="39S RIBOSOMAL PROTEIN L10, MITOCHONDRIAL"/>
    <property type="match status" value="1"/>
</dbReference>
<dbReference type="Pfam" id="PF00466">
    <property type="entry name" value="Ribosomal_L10"/>
    <property type="match status" value="1"/>
</dbReference>
<dbReference type="SUPFAM" id="SSF160369">
    <property type="entry name" value="Ribosomal protein L10-like"/>
    <property type="match status" value="1"/>
</dbReference>
<sequence length="171" mass="18368">MSHNLEEKKAIVAEVSDQIAEAQAIVIAEYRGLGVGQLTQLRVKARESGIYFRVIKNTFVRRAVVDTPFSGLAESMVGPLAYGIGSDPVITAKVLHEFAKDNDRFVIKAGAMAGTVMSGKDVAALAALPSREELLSRLLGTLQAPVAKFVRTLNEVPSKFVRGLAAVCDKK</sequence>
<accession>Q0AF51</accession>
<protein>
    <recommendedName>
        <fullName evidence="1">Large ribosomal subunit protein uL10</fullName>
    </recommendedName>
    <alternativeName>
        <fullName evidence="2">50S ribosomal protein L10</fullName>
    </alternativeName>
</protein>
<reference key="1">
    <citation type="journal article" date="2007" name="Environ. Microbiol.">
        <title>Whole-genome analysis of the ammonia-oxidizing bacterium, Nitrosomonas eutropha C91: implications for niche adaptation.</title>
        <authorList>
            <person name="Stein L.Y."/>
            <person name="Arp D.J."/>
            <person name="Berube P.M."/>
            <person name="Chain P.S."/>
            <person name="Hauser L."/>
            <person name="Jetten M.S."/>
            <person name="Klotz M.G."/>
            <person name="Larimer F.W."/>
            <person name="Norton J.M."/>
            <person name="Op den Camp H.J.M."/>
            <person name="Shin M."/>
            <person name="Wei X."/>
        </authorList>
    </citation>
    <scope>NUCLEOTIDE SEQUENCE [LARGE SCALE GENOMIC DNA]</scope>
    <source>
        <strain>DSM 101675 / C91 / Nm57</strain>
    </source>
</reference>
<keyword id="KW-0687">Ribonucleoprotein</keyword>
<keyword id="KW-0689">Ribosomal protein</keyword>
<keyword id="KW-0694">RNA-binding</keyword>
<keyword id="KW-0699">rRNA-binding</keyword>
<name>RL10_NITEC</name>
<gene>
    <name evidence="1" type="primary">rplJ</name>
    <name type="ordered locus">Neut_1797</name>
</gene>